<organism>
    <name type="scientific">Zea mays</name>
    <name type="common">Maize</name>
    <dbReference type="NCBI Taxonomy" id="4577"/>
    <lineage>
        <taxon>Eukaryota</taxon>
        <taxon>Viridiplantae</taxon>
        <taxon>Streptophyta</taxon>
        <taxon>Embryophyta</taxon>
        <taxon>Tracheophyta</taxon>
        <taxon>Spermatophyta</taxon>
        <taxon>Magnoliopsida</taxon>
        <taxon>Liliopsida</taxon>
        <taxon>Poales</taxon>
        <taxon>Poaceae</taxon>
        <taxon>PACMAD clade</taxon>
        <taxon>Panicoideae</taxon>
        <taxon>Andropogonodae</taxon>
        <taxon>Andropogoneae</taxon>
        <taxon>Tripsacinae</taxon>
        <taxon>Zea</taxon>
    </lineage>
</organism>
<feature type="chain" id="PRO_0000055518" description="Unknown protein from spot 474 of 2D-PAGE of etiolated coleoptile">
    <location>
        <begin position="1" status="less than"/>
        <end position="5" status="greater than"/>
    </location>
</feature>
<feature type="non-terminal residue">
    <location>
        <position position="1"/>
    </location>
</feature>
<feature type="non-terminal residue">
    <location>
        <position position="5"/>
    </location>
</feature>
<reference key="1">
    <citation type="journal article" date="1996" name="Theor. Appl. Genet.">
        <title>The maize two dimensional gel protein database: towards an integrated genome analysis program.</title>
        <authorList>
            <person name="Touzet P."/>
            <person name="Riccardi F."/>
            <person name="Morin C."/>
            <person name="Damerval C."/>
            <person name="Huet J.-C."/>
            <person name="Pernollet J.-C."/>
            <person name="Zivy M."/>
            <person name="de Vienne D."/>
        </authorList>
        <dbReference type="AGRICOLA" id="IND20551642"/>
    </citation>
    <scope>PROTEIN SEQUENCE</scope>
    <source>
        <tissue>Coleoptile</tissue>
    </source>
</reference>
<sequence length="5" mass="654">IFFEV</sequence>
<proteinExistence type="evidence at protein level"/>
<keyword id="KW-0903">Direct protein sequencing</keyword>
<keyword id="KW-1185">Reference proteome</keyword>
<name>UC22_MAIZE</name>
<dbReference type="MaizeGDB" id="123954"/>
<dbReference type="InParanoid" id="P80628"/>
<dbReference type="Proteomes" id="UP000007305">
    <property type="component" value="Unplaced"/>
</dbReference>
<comment type="miscellaneous">
    <text>On the 2D-gel the determined pI of this unknown protein is: 6.1, its MW is: 30.4 kDa.</text>
</comment>
<protein>
    <recommendedName>
        <fullName>Unknown protein from spot 474 of 2D-PAGE of etiolated coleoptile</fullName>
    </recommendedName>
</protein>
<accession>P80628</accession>